<protein>
    <recommendedName>
        <fullName evidence="1">GTP 3',8-cyclase</fullName>
        <ecNumber evidence="1">4.1.99.22</ecNumber>
    </recommendedName>
    <alternativeName>
        <fullName evidence="1">Molybdenum cofactor biosynthesis protein A</fullName>
    </alternativeName>
</protein>
<sequence>MVEQITDKLGRPIRDLRLSVTDRCNFRCDYCMPKEIFGDDFVFLPKDELLTFDEMVRIAQVYTQLGVKKIRITGGEPLLRRDLDKLIYQLNQLEGVEDIGLTTNGLLLKKHGQKLYDAGLRRINVSLDAIDDAVFQAINNRNIKASTILQQIDYAVAIGFQVKVNVVVQKGVNDDQIVPMVQYFKDKDVQIRFIEFMDVGNDNGWDFSKVVSKDEMLEMIEQNFDIEPVAPKYYGEVAKYYQHKDNKAQFGLITSVSQSFCSTCTRARLSSDGKFYGCLFSTVDGFNVKSFMRNGATDNELFEQFKALWNIRDDRYSDERTEQTVANRKRKKINMNYIGG</sequence>
<evidence type="ECO:0000255" key="1">
    <source>
        <dbReference type="HAMAP-Rule" id="MF_01225"/>
    </source>
</evidence>
<evidence type="ECO:0000255" key="2">
    <source>
        <dbReference type="PROSITE-ProRule" id="PRU01266"/>
    </source>
</evidence>
<accession>Q49ZI6</accession>
<dbReference type="EC" id="4.1.99.22" evidence="1"/>
<dbReference type="EMBL" id="AP008934">
    <property type="protein sequence ID" value="BAE17790.1"/>
    <property type="molecule type" value="Genomic_DNA"/>
</dbReference>
<dbReference type="RefSeq" id="WP_011302584.1">
    <property type="nucleotide sequence ID" value="NZ_MTGA01000036.1"/>
</dbReference>
<dbReference type="SMR" id="Q49ZI6"/>
<dbReference type="GeneID" id="66866793"/>
<dbReference type="KEGG" id="ssp:SSP0645"/>
<dbReference type="PATRIC" id="fig|342451.11.peg.648"/>
<dbReference type="eggNOG" id="COG2896">
    <property type="taxonomic scope" value="Bacteria"/>
</dbReference>
<dbReference type="HOGENOM" id="CLU_009273_0_1_9"/>
<dbReference type="OrthoDB" id="9763993at2"/>
<dbReference type="UniPathway" id="UPA00344"/>
<dbReference type="Proteomes" id="UP000006371">
    <property type="component" value="Chromosome"/>
</dbReference>
<dbReference type="GO" id="GO:0051539">
    <property type="term" value="F:4 iron, 4 sulfur cluster binding"/>
    <property type="evidence" value="ECO:0007669"/>
    <property type="project" value="UniProtKB-UniRule"/>
</dbReference>
<dbReference type="GO" id="GO:0061799">
    <property type="term" value="F:cyclic pyranopterin monophosphate synthase activity"/>
    <property type="evidence" value="ECO:0007669"/>
    <property type="project" value="TreeGrafter"/>
</dbReference>
<dbReference type="GO" id="GO:0061798">
    <property type="term" value="F:GTP 3',8'-cyclase activity"/>
    <property type="evidence" value="ECO:0007669"/>
    <property type="project" value="UniProtKB-UniRule"/>
</dbReference>
<dbReference type="GO" id="GO:0005525">
    <property type="term" value="F:GTP binding"/>
    <property type="evidence" value="ECO:0007669"/>
    <property type="project" value="UniProtKB-UniRule"/>
</dbReference>
<dbReference type="GO" id="GO:0046872">
    <property type="term" value="F:metal ion binding"/>
    <property type="evidence" value="ECO:0007669"/>
    <property type="project" value="UniProtKB-KW"/>
</dbReference>
<dbReference type="GO" id="GO:1904047">
    <property type="term" value="F:S-adenosyl-L-methionine binding"/>
    <property type="evidence" value="ECO:0007669"/>
    <property type="project" value="UniProtKB-UniRule"/>
</dbReference>
<dbReference type="GO" id="GO:0006777">
    <property type="term" value="P:Mo-molybdopterin cofactor biosynthetic process"/>
    <property type="evidence" value="ECO:0007669"/>
    <property type="project" value="UniProtKB-UniRule"/>
</dbReference>
<dbReference type="CDD" id="cd01335">
    <property type="entry name" value="Radical_SAM"/>
    <property type="match status" value="1"/>
</dbReference>
<dbReference type="CDD" id="cd21117">
    <property type="entry name" value="Twitch_MoaA"/>
    <property type="match status" value="1"/>
</dbReference>
<dbReference type="Gene3D" id="3.20.20.70">
    <property type="entry name" value="Aldolase class I"/>
    <property type="match status" value="1"/>
</dbReference>
<dbReference type="HAMAP" id="MF_01225_B">
    <property type="entry name" value="MoaA_B"/>
    <property type="match status" value="1"/>
</dbReference>
<dbReference type="InterPro" id="IPR013785">
    <property type="entry name" value="Aldolase_TIM"/>
</dbReference>
<dbReference type="InterPro" id="IPR006638">
    <property type="entry name" value="Elp3/MiaA/NifB-like_rSAM"/>
</dbReference>
<dbReference type="InterPro" id="IPR013483">
    <property type="entry name" value="MoaA"/>
</dbReference>
<dbReference type="InterPro" id="IPR000385">
    <property type="entry name" value="MoaA_NifB_PqqE_Fe-S-bd_CS"/>
</dbReference>
<dbReference type="InterPro" id="IPR010505">
    <property type="entry name" value="MoaA_twitch"/>
</dbReference>
<dbReference type="InterPro" id="IPR050105">
    <property type="entry name" value="MoCo_biosynth_MoaA/MoaC"/>
</dbReference>
<dbReference type="InterPro" id="IPR007197">
    <property type="entry name" value="rSAM"/>
</dbReference>
<dbReference type="NCBIfam" id="TIGR02666">
    <property type="entry name" value="moaA"/>
    <property type="match status" value="1"/>
</dbReference>
<dbReference type="PANTHER" id="PTHR22960:SF0">
    <property type="entry name" value="MOLYBDENUM COFACTOR BIOSYNTHESIS PROTEIN 1"/>
    <property type="match status" value="1"/>
</dbReference>
<dbReference type="PANTHER" id="PTHR22960">
    <property type="entry name" value="MOLYBDOPTERIN COFACTOR SYNTHESIS PROTEIN A"/>
    <property type="match status" value="1"/>
</dbReference>
<dbReference type="Pfam" id="PF06463">
    <property type="entry name" value="Mob_synth_C"/>
    <property type="match status" value="1"/>
</dbReference>
<dbReference type="Pfam" id="PF04055">
    <property type="entry name" value="Radical_SAM"/>
    <property type="match status" value="1"/>
</dbReference>
<dbReference type="SFLD" id="SFLDF00276">
    <property type="entry name" value="cyclic_pyranopterin_phosphate"/>
    <property type="match status" value="1"/>
</dbReference>
<dbReference type="SFLD" id="SFLDS00029">
    <property type="entry name" value="Radical_SAM"/>
    <property type="match status" value="1"/>
</dbReference>
<dbReference type="SMART" id="SM00729">
    <property type="entry name" value="Elp3"/>
    <property type="match status" value="1"/>
</dbReference>
<dbReference type="SUPFAM" id="SSF102114">
    <property type="entry name" value="Radical SAM enzymes"/>
    <property type="match status" value="1"/>
</dbReference>
<dbReference type="PROSITE" id="PS01305">
    <property type="entry name" value="MOAA_NIFB_PQQE"/>
    <property type="match status" value="1"/>
</dbReference>
<dbReference type="PROSITE" id="PS51918">
    <property type="entry name" value="RADICAL_SAM"/>
    <property type="match status" value="1"/>
</dbReference>
<comment type="function">
    <text evidence="1">Catalyzes the cyclization of GTP to (8S)-3',8-cyclo-7,8-dihydroguanosine 5'-triphosphate.</text>
</comment>
<comment type="catalytic activity">
    <reaction evidence="1">
        <text>GTP + AH2 + S-adenosyl-L-methionine = (8S)-3',8-cyclo-7,8-dihydroguanosine 5'-triphosphate + 5'-deoxyadenosine + L-methionine + A + H(+)</text>
        <dbReference type="Rhea" id="RHEA:49576"/>
        <dbReference type="ChEBI" id="CHEBI:13193"/>
        <dbReference type="ChEBI" id="CHEBI:15378"/>
        <dbReference type="ChEBI" id="CHEBI:17319"/>
        <dbReference type="ChEBI" id="CHEBI:17499"/>
        <dbReference type="ChEBI" id="CHEBI:37565"/>
        <dbReference type="ChEBI" id="CHEBI:57844"/>
        <dbReference type="ChEBI" id="CHEBI:59789"/>
        <dbReference type="ChEBI" id="CHEBI:131766"/>
        <dbReference type="EC" id="4.1.99.22"/>
    </reaction>
</comment>
<comment type="cofactor">
    <cofactor evidence="1">
        <name>[4Fe-4S] cluster</name>
        <dbReference type="ChEBI" id="CHEBI:49883"/>
    </cofactor>
    <text evidence="1">Binds 2 [4Fe-4S] clusters. Binds 1 [4Fe-4S] cluster coordinated with 3 cysteines and an exchangeable S-adenosyl-L-methionine and 1 [4Fe-4S] cluster coordinated with 3 cysteines and the GTP-derived substrate.</text>
</comment>
<comment type="pathway">
    <text evidence="1">Cofactor biosynthesis; molybdopterin biosynthesis.</text>
</comment>
<comment type="subunit">
    <text evidence="1">Monomer and homodimer.</text>
</comment>
<comment type="similarity">
    <text evidence="1">Belongs to the radical SAM superfamily. MoaA family.</text>
</comment>
<feature type="chain" id="PRO_0000153000" description="GTP 3',8-cyclase">
    <location>
        <begin position="1"/>
        <end position="340"/>
    </location>
</feature>
<feature type="domain" description="Radical SAM core" evidence="2">
    <location>
        <begin position="8"/>
        <end position="227"/>
    </location>
</feature>
<feature type="binding site" evidence="1">
    <location>
        <position position="17"/>
    </location>
    <ligand>
        <name>GTP</name>
        <dbReference type="ChEBI" id="CHEBI:37565"/>
    </ligand>
</feature>
<feature type="binding site" evidence="1">
    <location>
        <position position="24"/>
    </location>
    <ligand>
        <name>[4Fe-4S] cluster</name>
        <dbReference type="ChEBI" id="CHEBI:49883"/>
        <label>1</label>
        <note>4Fe-4S-S-AdoMet</note>
    </ligand>
</feature>
<feature type="binding site" evidence="1">
    <location>
        <position position="28"/>
    </location>
    <ligand>
        <name>[4Fe-4S] cluster</name>
        <dbReference type="ChEBI" id="CHEBI:49883"/>
        <label>1</label>
        <note>4Fe-4S-S-AdoMet</note>
    </ligand>
</feature>
<feature type="binding site" evidence="1">
    <location>
        <position position="30"/>
    </location>
    <ligand>
        <name>S-adenosyl-L-methionine</name>
        <dbReference type="ChEBI" id="CHEBI:59789"/>
    </ligand>
</feature>
<feature type="binding site" evidence="1">
    <location>
        <position position="31"/>
    </location>
    <ligand>
        <name>[4Fe-4S] cluster</name>
        <dbReference type="ChEBI" id="CHEBI:49883"/>
        <label>1</label>
        <note>4Fe-4S-S-AdoMet</note>
    </ligand>
</feature>
<feature type="binding site" evidence="1">
    <location>
        <position position="71"/>
    </location>
    <ligand>
        <name>GTP</name>
        <dbReference type="ChEBI" id="CHEBI:37565"/>
    </ligand>
</feature>
<feature type="binding site" evidence="1">
    <location>
        <position position="75"/>
    </location>
    <ligand>
        <name>S-adenosyl-L-methionine</name>
        <dbReference type="ChEBI" id="CHEBI:59789"/>
    </ligand>
</feature>
<feature type="binding site" evidence="1">
    <location>
        <position position="102"/>
    </location>
    <ligand>
        <name>GTP</name>
        <dbReference type="ChEBI" id="CHEBI:37565"/>
    </ligand>
</feature>
<feature type="binding site" evidence="1">
    <location>
        <position position="126"/>
    </location>
    <ligand>
        <name>S-adenosyl-L-methionine</name>
        <dbReference type="ChEBI" id="CHEBI:59789"/>
    </ligand>
</feature>
<feature type="binding site" evidence="1">
    <location>
        <position position="163"/>
    </location>
    <ligand>
        <name>GTP</name>
        <dbReference type="ChEBI" id="CHEBI:37565"/>
    </ligand>
</feature>
<feature type="binding site" evidence="1">
    <location>
        <position position="197"/>
    </location>
    <ligand>
        <name>S-adenosyl-L-methionine</name>
        <dbReference type="ChEBI" id="CHEBI:59789"/>
    </ligand>
</feature>
<feature type="binding site" evidence="1">
    <location>
        <position position="261"/>
    </location>
    <ligand>
        <name>[4Fe-4S] cluster</name>
        <dbReference type="ChEBI" id="CHEBI:49883"/>
        <label>2</label>
        <note>4Fe-4S-substrate</note>
    </ligand>
</feature>
<feature type="binding site" evidence="1">
    <location>
        <position position="264"/>
    </location>
    <ligand>
        <name>[4Fe-4S] cluster</name>
        <dbReference type="ChEBI" id="CHEBI:49883"/>
        <label>2</label>
        <note>4Fe-4S-substrate</note>
    </ligand>
</feature>
<feature type="binding site" evidence="1">
    <location>
        <begin position="266"/>
        <end position="268"/>
    </location>
    <ligand>
        <name>GTP</name>
        <dbReference type="ChEBI" id="CHEBI:37565"/>
    </ligand>
</feature>
<feature type="binding site" evidence="1">
    <location>
        <position position="278"/>
    </location>
    <ligand>
        <name>[4Fe-4S] cluster</name>
        <dbReference type="ChEBI" id="CHEBI:49883"/>
        <label>2</label>
        <note>4Fe-4S-substrate</note>
    </ligand>
</feature>
<organism>
    <name type="scientific">Staphylococcus saprophyticus subsp. saprophyticus (strain ATCC 15305 / DSM 20229 / NCIMB 8711 / NCTC 7292 / S-41)</name>
    <dbReference type="NCBI Taxonomy" id="342451"/>
    <lineage>
        <taxon>Bacteria</taxon>
        <taxon>Bacillati</taxon>
        <taxon>Bacillota</taxon>
        <taxon>Bacilli</taxon>
        <taxon>Bacillales</taxon>
        <taxon>Staphylococcaceae</taxon>
        <taxon>Staphylococcus</taxon>
    </lineage>
</organism>
<keyword id="KW-0004">4Fe-4S</keyword>
<keyword id="KW-0342">GTP-binding</keyword>
<keyword id="KW-0408">Iron</keyword>
<keyword id="KW-0411">Iron-sulfur</keyword>
<keyword id="KW-0456">Lyase</keyword>
<keyword id="KW-0479">Metal-binding</keyword>
<keyword id="KW-0501">Molybdenum cofactor biosynthesis</keyword>
<keyword id="KW-0547">Nucleotide-binding</keyword>
<keyword id="KW-1185">Reference proteome</keyword>
<keyword id="KW-0949">S-adenosyl-L-methionine</keyword>
<name>MOAA_STAS1</name>
<proteinExistence type="inferred from homology"/>
<gene>
    <name evidence="1" type="primary">moaA</name>
    <name type="ordered locus">SSP0645</name>
</gene>
<reference key="1">
    <citation type="journal article" date="2005" name="Proc. Natl. Acad. Sci. U.S.A.">
        <title>Whole genome sequence of Staphylococcus saprophyticus reveals the pathogenesis of uncomplicated urinary tract infection.</title>
        <authorList>
            <person name="Kuroda M."/>
            <person name="Yamashita A."/>
            <person name="Hirakawa H."/>
            <person name="Kumano M."/>
            <person name="Morikawa K."/>
            <person name="Higashide M."/>
            <person name="Maruyama A."/>
            <person name="Inose Y."/>
            <person name="Matoba K."/>
            <person name="Toh H."/>
            <person name="Kuhara S."/>
            <person name="Hattori M."/>
            <person name="Ohta T."/>
        </authorList>
    </citation>
    <scope>NUCLEOTIDE SEQUENCE [LARGE SCALE GENOMIC DNA]</scope>
    <source>
        <strain>ATCC 15305 / DSM 20229 / NCIMB 8711 / NCTC 7292 / S-41</strain>
    </source>
</reference>